<name>YD18A_YEAST</name>
<reference key="1">
    <citation type="journal article" date="1997" name="Nature">
        <title>The nucleotide sequence of Saccharomyces cerevisiae chromosome IV.</title>
        <authorList>
            <person name="Jacq C."/>
            <person name="Alt-Moerbe J."/>
            <person name="Andre B."/>
            <person name="Arnold W."/>
            <person name="Bahr A."/>
            <person name="Ballesta J.P.G."/>
            <person name="Bargues M."/>
            <person name="Baron L."/>
            <person name="Becker A."/>
            <person name="Biteau N."/>
            <person name="Bloecker H."/>
            <person name="Blugeon C."/>
            <person name="Boskovic J."/>
            <person name="Brandt P."/>
            <person name="Brueckner M."/>
            <person name="Buitrago M.J."/>
            <person name="Coster F."/>
            <person name="Delaveau T."/>
            <person name="del Rey F."/>
            <person name="Dujon B."/>
            <person name="Eide L.G."/>
            <person name="Garcia-Cantalejo J.M."/>
            <person name="Goffeau A."/>
            <person name="Gomez-Peris A."/>
            <person name="Granotier C."/>
            <person name="Hanemann V."/>
            <person name="Hankeln T."/>
            <person name="Hoheisel J.D."/>
            <person name="Jaeger W."/>
            <person name="Jimenez A."/>
            <person name="Jonniaux J.-L."/>
            <person name="Kraemer C."/>
            <person name="Kuester H."/>
            <person name="Laamanen P."/>
            <person name="Legros Y."/>
            <person name="Louis E.J."/>
            <person name="Moeller-Rieker S."/>
            <person name="Monnet A."/>
            <person name="Moro M."/>
            <person name="Mueller-Auer S."/>
            <person name="Nussbaumer B."/>
            <person name="Paricio N."/>
            <person name="Paulin L."/>
            <person name="Perea J."/>
            <person name="Perez-Alonso M."/>
            <person name="Perez-Ortin J.E."/>
            <person name="Pohl T.M."/>
            <person name="Prydz H."/>
            <person name="Purnelle B."/>
            <person name="Rasmussen S.W."/>
            <person name="Remacha M.A."/>
            <person name="Revuelta J.L."/>
            <person name="Rieger M."/>
            <person name="Salom D."/>
            <person name="Saluz H.P."/>
            <person name="Saiz J.E."/>
            <person name="Saren A.-M."/>
            <person name="Schaefer M."/>
            <person name="Scharfe M."/>
            <person name="Schmidt E.R."/>
            <person name="Schneider C."/>
            <person name="Scholler P."/>
            <person name="Schwarz S."/>
            <person name="Soler-Mira A."/>
            <person name="Urrestarazu L.A."/>
            <person name="Verhasselt P."/>
            <person name="Vissers S."/>
            <person name="Voet M."/>
            <person name="Volckaert G."/>
            <person name="Wagner G."/>
            <person name="Wambutt R."/>
            <person name="Wedler E."/>
            <person name="Wedler H."/>
            <person name="Woelfl S."/>
            <person name="Harris D.E."/>
            <person name="Bowman S."/>
            <person name="Brown D."/>
            <person name="Churcher C.M."/>
            <person name="Connor R."/>
            <person name="Dedman K."/>
            <person name="Gentles S."/>
            <person name="Hamlin N."/>
            <person name="Hunt S."/>
            <person name="Jones L."/>
            <person name="McDonald S."/>
            <person name="Murphy L.D."/>
            <person name="Niblett D."/>
            <person name="Odell C."/>
            <person name="Oliver K."/>
            <person name="Rajandream M.A."/>
            <person name="Richards C."/>
            <person name="Shore L."/>
            <person name="Walsh S.V."/>
            <person name="Barrell B.G."/>
            <person name="Dietrich F.S."/>
            <person name="Mulligan J.T."/>
            <person name="Allen E."/>
            <person name="Araujo R."/>
            <person name="Aviles E."/>
            <person name="Berno A."/>
            <person name="Carpenter J."/>
            <person name="Chen E."/>
            <person name="Cherry J.M."/>
            <person name="Chung E."/>
            <person name="Duncan M."/>
            <person name="Hunicke-Smith S."/>
            <person name="Hyman R.W."/>
            <person name="Komp C."/>
            <person name="Lashkari D."/>
            <person name="Lew H."/>
            <person name="Lin D."/>
            <person name="Mosedale D."/>
            <person name="Nakahara K."/>
            <person name="Namath A."/>
            <person name="Oefner P."/>
            <person name="Oh C."/>
            <person name="Petel F.X."/>
            <person name="Roberts D."/>
            <person name="Schramm S."/>
            <person name="Schroeder M."/>
            <person name="Shogren T."/>
            <person name="Shroff N."/>
            <person name="Winant A."/>
            <person name="Yelton M.A."/>
            <person name="Botstein D."/>
            <person name="Davis R.W."/>
            <person name="Johnston M."/>
            <person name="Andrews S."/>
            <person name="Brinkman R."/>
            <person name="Cooper J."/>
            <person name="Ding H."/>
            <person name="Du Z."/>
            <person name="Favello A."/>
            <person name="Fulton L."/>
            <person name="Gattung S."/>
            <person name="Greco T."/>
            <person name="Hallsworth K."/>
            <person name="Hawkins J."/>
            <person name="Hillier L.W."/>
            <person name="Jier M."/>
            <person name="Johnson D."/>
            <person name="Johnston L."/>
            <person name="Kirsten J."/>
            <person name="Kucaba T."/>
            <person name="Langston Y."/>
            <person name="Latreille P."/>
            <person name="Le T."/>
            <person name="Mardis E."/>
            <person name="Menezes S."/>
            <person name="Miller N."/>
            <person name="Nhan M."/>
            <person name="Pauley A."/>
            <person name="Peluso D."/>
            <person name="Rifkin L."/>
            <person name="Riles L."/>
            <person name="Taich A."/>
            <person name="Trevaskis E."/>
            <person name="Vignati D."/>
            <person name="Wilcox L."/>
            <person name="Wohldman P."/>
            <person name="Vaudin M."/>
            <person name="Wilson R."/>
            <person name="Waterston R."/>
            <person name="Albermann K."/>
            <person name="Hani J."/>
            <person name="Heumann K."/>
            <person name="Kleine K."/>
            <person name="Mewes H.-W."/>
            <person name="Zollner A."/>
            <person name="Zaccaria P."/>
        </authorList>
    </citation>
    <scope>NUCLEOTIDE SEQUENCE [LARGE SCALE GENOMIC DNA]</scope>
    <source>
        <strain>ATCC 204508 / S288c</strain>
    </source>
</reference>
<reference key="2">
    <citation type="journal article" date="2014" name="G3 (Bethesda)">
        <title>The reference genome sequence of Saccharomyces cerevisiae: Then and now.</title>
        <authorList>
            <person name="Engel S.R."/>
            <person name="Dietrich F.S."/>
            <person name="Fisk D.G."/>
            <person name="Binkley G."/>
            <person name="Balakrishnan R."/>
            <person name="Costanzo M.C."/>
            <person name="Dwight S.S."/>
            <person name="Hitz B.C."/>
            <person name="Karra K."/>
            <person name="Nash R.S."/>
            <person name="Weng S."/>
            <person name="Wong E.D."/>
            <person name="Lloyd P."/>
            <person name="Skrzypek M.S."/>
            <person name="Miyasato S.R."/>
            <person name="Simison M."/>
            <person name="Cherry J.M."/>
        </authorList>
    </citation>
    <scope>GENOME REANNOTATION</scope>
    <source>
        <strain>ATCC 204508 / S288c</strain>
    </source>
</reference>
<reference key="3">
    <citation type="journal article" date="2002" name="Genome Res.">
        <title>Parallel identification of new genes in Saccharomyces cerevisiae.</title>
        <authorList>
            <person name="Oshiro G."/>
            <person name="Wodicka L.M."/>
            <person name="Washburn M.P."/>
            <person name="Yates J.R. III"/>
            <person name="Lockhart D.J."/>
            <person name="Winzeler E.A."/>
        </authorList>
    </citation>
    <scope>IDENTIFICATION BY MASS SPECTROMETRY</scope>
</reference>
<accession>P0C5L7</accession>
<gene>
    <name type="ordered locus">YDR118W-A</name>
</gene>
<proteinExistence type="evidence at protein level"/>
<dbReference type="EMBL" id="Z48758">
    <property type="status" value="NOT_ANNOTATED_CDS"/>
    <property type="molecule type" value="Genomic_DNA"/>
</dbReference>
<dbReference type="EMBL" id="BK006938">
    <property type="status" value="NOT_ANNOTATED_CDS"/>
    <property type="molecule type" value="Genomic_DNA"/>
</dbReference>
<dbReference type="SMR" id="P0C5L7"/>
<dbReference type="STRING" id="4932.YDR118W-A"/>
<dbReference type="PaxDb" id="4932-YDR118W-A"/>
<dbReference type="EnsemblFungi" id="YDR118W-A_mRNA">
    <property type="protein sequence ID" value="YDR118W-A"/>
    <property type="gene ID" value="YDR118W-A"/>
</dbReference>
<dbReference type="AGR" id="SGD:S000028820"/>
<dbReference type="SGD" id="S000028820">
    <property type="gene designation" value="YDR118W-A"/>
</dbReference>
<dbReference type="HOGENOM" id="CLU_3335852_0_0_1"/>
<dbReference type="InParanoid" id="P0C5L7"/>
<dbReference type="PRO" id="PR:P0C5L7"/>
<dbReference type="Proteomes" id="UP000002311">
    <property type="component" value="Chromosome IV"/>
</dbReference>
<protein>
    <recommendedName>
        <fullName>Uncharacterized protein YDR118W-A</fullName>
    </recommendedName>
</protein>
<organism>
    <name type="scientific">Saccharomyces cerevisiae (strain ATCC 204508 / S288c)</name>
    <name type="common">Baker's yeast</name>
    <dbReference type="NCBI Taxonomy" id="559292"/>
    <lineage>
        <taxon>Eukaryota</taxon>
        <taxon>Fungi</taxon>
        <taxon>Dikarya</taxon>
        <taxon>Ascomycota</taxon>
        <taxon>Saccharomycotina</taxon>
        <taxon>Saccharomycetes</taxon>
        <taxon>Saccharomycetales</taxon>
        <taxon>Saccharomycetaceae</taxon>
        <taxon>Saccharomyces</taxon>
    </lineage>
</organism>
<feature type="chain" id="PRO_0000309015" description="Uncharacterized protein YDR118W-A">
    <location>
        <begin position="1"/>
        <end position="38"/>
    </location>
</feature>
<sequence length="38" mass="4450">MHREGIGGWKKRIPSVSKRKTKCLTHRQMTSSFFLVFA</sequence>
<keyword id="KW-1185">Reference proteome</keyword>